<gene>
    <name evidence="2" type="primary">dhaA</name>
    <name type="ordered locus">MRA_2608</name>
</gene>
<dbReference type="EC" id="3.8.1.5" evidence="2"/>
<dbReference type="EMBL" id="CP000611">
    <property type="protein sequence ID" value="ABQ74379.1"/>
    <property type="molecule type" value="Genomic_DNA"/>
</dbReference>
<dbReference type="RefSeq" id="WP_003413363.1">
    <property type="nucleotide sequence ID" value="NZ_CP016972.1"/>
</dbReference>
<dbReference type="SMR" id="A5U5S9"/>
<dbReference type="ESTHER" id="myctu-linb">
    <property type="family name" value="Haloalkane_dehalogenase-HLD2"/>
</dbReference>
<dbReference type="KEGG" id="mra:MRA_2608"/>
<dbReference type="eggNOG" id="COG0596">
    <property type="taxonomic scope" value="Bacteria"/>
</dbReference>
<dbReference type="HOGENOM" id="CLU_020336_13_3_11"/>
<dbReference type="Proteomes" id="UP000001988">
    <property type="component" value="Chromosome"/>
</dbReference>
<dbReference type="GO" id="GO:0018786">
    <property type="term" value="F:haloalkane dehalogenase activity"/>
    <property type="evidence" value="ECO:0007669"/>
    <property type="project" value="UniProtKB-UniRule"/>
</dbReference>
<dbReference type="FunFam" id="3.40.50.1820:FF:000304">
    <property type="entry name" value="Haloalkane dehalogenase 3"/>
    <property type="match status" value="1"/>
</dbReference>
<dbReference type="Gene3D" id="3.40.50.1820">
    <property type="entry name" value="alpha/beta hydrolase"/>
    <property type="match status" value="1"/>
</dbReference>
<dbReference type="HAMAP" id="MF_01231">
    <property type="entry name" value="Haloalk_dehal_type2"/>
    <property type="match status" value="1"/>
</dbReference>
<dbReference type="InterPro" id="IPR000073">
    <property type="entry name" value="AB_hydrolase_1"/>
</dbReference>
<dbReference type="InterPro" id="IPR029058">
    <property type="entry name" value="AB_hydrolase_fold"/>
</dbReference>
<dbReference type="InterPro" id="IPR000639">
    <property type="entry name" value="Epox_hydrolase-like"/>
</dbReference>
<dbReference type="InterPro" id="IPR023594">
    <property type="entry name" value="Haloalkane_dehalogenase_2"/>
</dbReference>
<dbReference type="NCBIfam" id="NF002938">
    <property type="entry name" value="PRK03592.1"/>
    <property type="match status" value="1"/>
</dbReference>
<dbReference type="PANTHER" id="PTHR43329">
    <property type="entry name" value="EPOXIDE HYDROLASE"/>
    <property type="match status" value="1"/>
</dbReference>
<dbReference type="Pfam" id="PF00561">
    <property type="entry name" value="Abhydrolase_1"/>
    <property type="match status" value="1"/>
</dbReference>
<dbReference type="PRINTS" id="PR00412">
    <property type="entry name" value="EPOXHYDRLASE"/>
</dbReference>
<dbReference type="SUPFAM" id="SSF53474">
    <property type="entry name" value="alpha/beta-Hydrolases"/>
    <property type="match status" value="1"/>
</dbReference>
<feature type="chain" id="PRO_1000066844" description="Haloalkane dehalogenase">
    <location>
        <begin position="1"/>
        <end position="300"/>
    </location>
</feature>
<feature type="domain" description="AB hydrolase-1" evidence="1">
    <location>
        <begin position="32"/>
        <end position="155"/>
    </location>
</feature>
<feature type="active site" description="Nucleophile" evidence="2">
    <location>
        <position position="109"/>
    </location>
</feature>
<feature type="active site" description="Proton donor" evidence="2">
    <location>
        <position position="133"/>
    </location>
</feature>
<feature type="active site" description="Proton acceptor" evidence="2">
    <location>
        <position position="273"/>
    </location>
</feature>
<organism>
    <name type="scientific">Mycobacterium tuberculosis (strain ATCC 25177 / H37Ra)</name>
    <dbReference type="NCBI Taxonomy" id="419947"/>
    <lineage>
        <taxon>Bacteria</taxon>
        <taxon>Bacillati</taxon>
        <taxon>Actinomycetota</taxon>
        <taxon>Actinomycetes</taxon>
        <taxon>Mycobacteriales</taxon>
        <taxon>Mycobacteriaceae</taxon>
        <taxon>Mycobacterium</taxon>
        <taxon>Mycobacterium tuberculosis complex</taxon>
    </lineage>
</organism>
<accession>A5U5S9</accession>
<reference key="1">
    <citation type="journal article" date="2008" name="PLoS ONE">
        <title>Genetic basis of virulence attenuation revealed by comparative genomic analysis of Mycobacterium tuberculosis strain H37Ra versus H37Rv.</title>
        <authorList>
            <person name="Zheng H."/>
            <person name="Lu L."/>
            <person name="Wang B."/>
            <person name="Pu S."/>
            <person name="Zhang X."/>
            <person name="Zhu G."/>
            <person name="Shi W."/>
            <person name="Zhang L."/>
            <person name="Wang H."/>
            <person name="Wang S."/>
            <person name="Zhao G."/>
            <person name="Zhang Y."/>
        </authorList>
    </citation>
    <scope>NUCLEOTIDE SEQUENCE [LARGE SCALE GENOMIC DNA]</scope>
    <source>
        <strain>ATCC 25177 / H37Ra</strain>
    </source>
</reference>
<name>DHAA_MYCTA</name>
<sequence length="300" mass="33728">MTAFGVEPYGQPKYLEIAGKRMAYIDEGKGDAIVFQHGNPTSSYLWRNIMPHLEGLGRLVACDLIGMGASDKLSPSGPDRYSYGEQRDFLFALWDALDLGDHVVLVLHDWGSALGFDWANQHRDRVQGIAFMEAIVTPMTWADWPPAVRGVFQGFRSPQGEPMALEHNIFVERVLPGAILRQLSDEEMNHYRRPFVNGGEDRRPTLSWPRNLPIDGEPAEVVALVNEYRSWLEETDMPKLFINAEPGAIITGRIRDYVRSWPNQTEITVPGVHFVQEDSPEEIGAAIAQFVRRLRSAAGV</sequence>
<keyword id="KW-0378">Hydrolase</keyword>
<keyword id="KW-1185">Reference proteome</keyword>
<evidence type="ECO:0000255" key="1"/>
<evidence type="ECO:0000255" key="2">
    <source>
        <dbReference type="HAMAP-Rule" id="MF_01231"/>
    </source>
</evidence>
<proteinExistence type="inferred from homology"/>
<protein>
    <recommendedName>
        <fullName evidence="2">Haloalkane dehalogenase</fullName>
        <ecNumber evidence="2">3.8.1.5</ecNumber>
    </recommendedName>
</protein>
<comment type="function">
    <text evidence="2">Catalyzes hydrolytic cleavage of carbon-halogen bonds in halogenated aliphatic compounds, leading to the formation of the corresponding primary alcohols, halide ions and protons.</text>
</comment>
<comment type="catalytic activity">
    <reaction evidence="2">
        <text>1-haloalkane + H2O = a halide anion + a primary alcohol + H(+)</text>
        <dbReference type="Rhea" id="RHEA:19081"/>
        <dbReference type="ChEBI" id="CHEBI:15377"/>
        <dbReference type="ChEBI" id="CHEBI:15378"/>
        <dbReference type="ChEBI" id="CHEBI:15734"/>
        <dbReference type="ChEBI" id="CHEBI:16042"/>
        <dbReference type="ChEBI" id="CHEBI:18060"/>
        <dbReference type="EC" id="3.8.1.5"/>
    </reaction>
</comment>
<comment type="subunit">
    <text evidence="2">Monomer.</text>
</comment>
<comment type="similarity">
    <text evidence="2">Belongs to the haloalkane dehalogenase family. Type 2 subfamily.</text>
</comment>